<dbReference type="EC" id="4.2.1.36"/>
<dbReference type="EMBL" id="AB017109">
    <property type="protein sequence ID" value="BAA74763.1"/>
    <property type="molecule type" value="mRNA"/>
</dbReference>
<dbReference type="EMBL" id="AE017221">
    <property type="protein sequence ID" value="AAS81888.1"/>
    <property type="molecule type" value="Genomic_DNA"/>
</dbReference>
<dbReference type="RefSeq" id="WP_011173920.1">
    <property type="nucleotide sequence ID" value="NC_005835.1"/>
</dbReference>
<dbReference type="SMR" id="Q9ZND9"/>
<dbReference type="KEGG" id="tth:TT_C1546"/>
<dbReference type="eggNOG" id="COG0066">
    <property type="taxonomic scope" value="Bacteria"/>
</dbReference>
<dbReference type="HOGENOM" id="CLU_081378_1_1_0"/>
<dbReference type="OrthoDB" id="9777465at2"/>
<dbReference type="BioCyc" id="MetaCyc:MONOMER-6724"/>
<dbReference type="SABIO-RK" id="Q9ZND9"/>
<dbReference type="UniPathway" id="UPA00033">
    <property type="reaction ID" value="UER01027"/>
</dbReference>
<dbReference type="Proteomes" id="UP000000592">
    <property type="component" value="Chromosome"/>
</dbReference>
<dbReference type="GO" id="GO:0003861">
    <property type="term" value="F:3-isopropylmalate dehydratase activity"/>
    <property type="evidence" value="ECO:0007669"/>
    <property type="project" value="UniProtKB-UniRule"/>
</dbReference>
<dbReference type="GO" id="GO:0004409">
    <property type="term" value="F:homoaconitate hydratase activity"/>
    <property type="evidence" value="ECO:0007669"/>
    <property type="project" value="UniProtKB-EC"/>
</dbReference>
<dbReference type="GO" id="GO:0009098">
    <property type="term" value="P:L-leucine biosynthetic process"/>
    <property type="evidence" value="ECO:0007669"/>
    <property type="project" value="UniProtKB-UniRule"/>
</dbReference>
<dbReference type="GO" id="GO:0019878">
    <property type="term" value="P:lysine biosynthetic process via aminoadipic acid"/>
    <property type="evidence" value="ECO:0007669"/>
    <property type="project" value="UniProtKB-UniPathway"/>
</dbReference>
<dbReference type="CDD" id="cd01577">
    <property type="entry name" value="IPMI_Swivel"/>
    <property type="match status" value="1"/>
</dbReference>
<dbReference type="Gene3D" id="3.20.19.10">
    <property type="entry name" value="Aconitase, domain 4"/>
    <property type="match status" value="1"/>
</dbReference>
<dbReference type="HAMAP" id="MF_01032">
    <property type="entry name" value="LeuD_type2"/>
    <property type="match status" value="1"/>
</dbReference>
<dbReference type="InterPro" id="IPR015928">
    <property type="entry name" value="Aconitase/3IPM_dehydase_swvl"/>
</dbReference>
<dbReference type="InterPro" id="IPR000573">
    <property type="entry name" value="AconitaseA/IPMdHydase_ssu_swvl"/>
</dbReference>
<dbReference type="InterPro" id="IPR033940">
    <property type="entry name" value="IPMI_Swivel"/>
</dbReference>
<dbReference type="InterPro" id="IPR050075">
    <property type="entry name" value="LeuD"/>
</dbReference>
<dbReference type="InterPro" id="IPR011827">
    <property type="entry name" value="LeuD_type2/HacB/DmdB"/>
</dbReference>
<dbReference type="NCBIfam" id="TIGR02087">
    <property type="entry name" value="LEUD_arch"/>
    <property type="match status" value="1"/>
</dbReference>
<dbReference type="NCBIfam" id="NF010629">
    <property type="entry name" value="PRK14023.1"/>
    <property type="match status" value="1"/>
</dbReference>
<dbReference type="PANTHER" id="PTHR43345:SF10">
    <property type="entry name" value="3-ISOPROPYLMALATE DEHYDRATASE SMALL SUBUNIT 1"/>
    <property type="match status" value="1"/>
</dbReference>
<dbReference type="PANTHER" id="PTHR43345">
    <property type="entry name" value="3-ISOPROPYLMALATE DEHYDRATASE SMALL SUBUNIT 2-RELATED-RELATED"/>
    <property type="match status" value="1"/>
</dbReference>
<dbReference type="Pfam" id="PF00694">
    <property type="entry name" value="Aconitase_C"/>
    <property type="match status" value="1"/>
</dbReference>
<dbReference type="SUPFAM" id="SSF52016">
    <property type="entry name" value="LeuD/IlvD-like"/>
    <property type="match status" value="1"/>
</dbReference>
<organism>
    <name type="scientific">Thermus thermophilus (strain ATCC BAA-163 / DSM 7039 / HB27)</name>
    <dbReference type="NCBI Taxonomy" id="262724"/>
    <lineage>
        <taxon>Bacteria</taxon>
        <taxon>Thermotogati</taxon>
        <taxon>Deinococcota</taxon>
        <taxon>Deinococci</taxon>
        <taxon>Thermales</taxon>
        <taxon>Thermaceae</taxon>
        <taxon>Thermus</taxon>
    </lineage>
</organism>
<comment type="function">
    <text evidence="1 2">Catalyzes the reversible hydration of cis-homoaconitate ((Z)-but-1-ene-1,2,4-tricarboxylate) to homoisocitrate ((1R,2S)-1-hydroxybutane-1,2,4-tricarboxylate). Can catalyze neither the dehydration of (R)-homocitrate ((2R)-2-hydroxybutane-1,2,4-tricarboxylate) into cis-homoaconitate in vitro, nor the reverse reaction. Is not active toward (S)-homocitrate, cis-aconitate or citrate as substrate.</text>
</comment>
<comment type="catalytic activity">
    <reaction evidence="2">
        <text>(2R,3S)-homoisocitrate = cis-homoaconitate + H2O</text>
        <dbReference type="Rhea" id="RHEA:15485"/>
        <dbReference type="ChEBI" id="CHEBI:15377"/>
        <dbReference type="ChEBI" id="CHEBI:15404"/>
        <dbReference type="ChEBI" id="CHEBI:58174"/>
        <dbReference type="EC" id="4.2.1.36"/>
    </reaction>
</comment>
<comment type="activity regulation">
    <text evidence="2">Is not inhibited by lysine.</text>
</comment>
<comment type="biophysicochemical properties">
    <kinetics>
        <KM evidence="2">8.2 uM for cis-homoaconitate (at 60 degrees Celsius and pH 8)</KM>
        <KM evidence="2">36 uM for homoisocitrate (at 60 degrees Celsius and pH 8)</KM>
    </kinetics>
    <phDependence>
        <text evidence="2">Optimum pH is 8.0.</text>
    </phDependence>
</comment>
<comment type="pathway">
    <text evidence="1">Amino-acid biosynthesis; L-lysine biosynthesis via AAA pathway; L-alpha-aminoadipate from 2-oxoglutarate: step 3/5.</text>
</comment>
<comment type="subunit">
    <text evidence="3">Heterodimer of HacA and HacB.</text>
</comment>
<comment type="similarity">
    <text evidence="3">Belongs to the LeuD family.</text>
</comment>
<reference key="1">
    <citation type="journal article" date="1999" name="J. Bacteriol.">
        <title>Aspartate kinase-independent lysine synthesis in an extremely thermophilic bacterium, Thermus thermophilus: lysine is synthesized via alpha-aminoadipic acid not via diaminopimelic acid.</title>
        <authorList>
            <person name="Kobashi N."/>
            <person name="Nishiyama M."/>
            <person name="Tanokura M."/>
        </authorList>
    </citation>
    <scope>NUCLEOTIDE SEQUENCE [GENOMIC DNA]</scope>
</reference>
<reference key="2">
    <citation type="journal article" date="2004" name="Nat. Biotechnol.">
        <title>The genome sequence of the extreme thermophile Thermus thermophilus.</title>
        <authorList>
            <person name="Henne A."/>
            <person name="Brueggemann H."/>
            <person name="Raasch C."/>
            <person name="Wiezer A."/>
            <person name="Hartsch T."/>
            <person name="Liesegang H."/>
            <person name="Johann A."/>
            <person name="Lienard T."/>
            <person name="Gohl O."/>
            <person name="Martinez-Arias R."/>
            <person name="Jacobi C."/>
            <person name="Starkuviene V."/>
            <person name="Schlenczeck S."/>
            <person name="Dencker S."/>
            <person name="Huber R."/>
            <person name="Klenk H.-P."/>
            <person name="Kramer W."/>
            <person name="Merkl R."/>
            <person name="Gottschalk G."/>
            <person name="Fritz H.-J."/>
        </authorList>
    </citation>
    <scope>NUCLEOTIDE SEQUENCE [LARGE SCALE GENOMIC DNA]</scope>
    <source>
        <strain>ATCC BAA-163 / DSM 7039 / HB27</strain>
    </source>
</reference>
<reference key="3">
    <citation type="journal article" date="1999" name="Genome Res.">
        <title>A prokaryotic gene cluster involved in synthesis of lysine through the amino adipate pathway: a key to the evolution of amino acid biosynthesis.</title>
        <authorList>
            <person name="Nishida H."/>
            <person name="Nishiyama M."/>
            <person name="Kobashi N."/>
            <person name="Kosuge T."/>
            <person name="Hoshino T."/>
            <person name="Yamane H."/>
        </authorList>
    </citation>
    <scope>ROLE IN LYSINE BIOSYNTHESIS</scope>
    <scope>PATHWAY</scope>
</reference>
<reference key="4">
    <citation type="journal article" date="2006" name="Biochem. J.">
        <title>Kinetics and product analysis of the reaction catalysed by recombinant homoaconitase from Thermus thermophilus.</title>
        <authorList>
            <person name="Jia Y."/>
            <person name="Tomita T."/>
            <person name="Yamauchi K."/>
            <person name="Nishiyama M."/>
            <person name="Palmer D.R.J."/>
        </authorList>
    </citation>
    <scope>FUNCTION</scope>
    <scope>CATALYTIC ACTIVITY</scope>
    <scope>SUBSTRATE SPECIFICITY</scope>
    <scope>ACTIVITY REGULATION</scope>
    <scope>BIOPHYSICOCHEMICAL PROPERTIES</scope>
</reference>
<evidence type="ECO:0000269" key="1">
    <source>
    </source>
</evidence>
<evidence type="ECO:0000269" key="2">
    <source>
    </source>
</evidence>
<evidence type="ECO:0000305" key="3"/>
<sequence>MPRVWKFGDQINTDDILPGKYAPFMVGEDRFHLYAFAHLRPEFAKEVRPGDILVFGRNAGLGSSREYAPEALKRLGVRAIIAKSYARIFFRNLVNLGIVPFESEEVVDALEDGDEVELDLESGVLTRGEERFALRPPPPFLLEALKEGSLLDYYKKHGRFPGE</sequence>
<gene>
    <name type="primary">hacB</name>
    <name type="synonym">lys4B</name>
    <name type="synonym">lysU</name>
    <name type="ordered locus">TT_C1546</name>
</gene>
<name>HACB_THET2</name>
<accession>Q9ZND9</accession>
<protein>
    <recommendedName>
        <fullName>Homoaconitase small subunit</fullName>
        <shortName>HACN</shortName>
        <ecNumber>4.2.1.36</ecNumber>
    </recommendedName>
    <alternativeName>
        <fullName>Homoaconitate hydratase</fullName>
    </alternativeName>
</protein>
<proteinExistence type="evidence at protein level"/>
<feature type="chain" id="PRO_0000141954" description="Homoaconitase small subunit">
    <location>
        <begin position="1"/>
        <end position="163"/>
    </location>
</feature>
<keyword id="KW-0028">Amino-acid biosynthesis</keyword>
<keyword id="KW-0456">Lyase</keyword>
<keyword id="KW-0457">Lysine biosynthesis</keyword>